<comment type="function">
    <text evidence="1">May play a role into cellular response to oxidative stress. May decrease cell proliferation (By similarity).</text>
</comment>
<comment type="subcellular location">
    <subcellularLocation>
        <location evidence="1">Nucleus</location>
    </subcellularLocation>
</comment>
<comment type="similarity">
    <text evidence="4">Belongs to the EIF1AD family.</text>
</comment>
<organism>
    <name type="scientific">Xenopus tropicalis</name>
    <name type="common">Western clawed frog</name>
    <name type="synonym">Silurana tropicalis</name>
    <dbReference type="NCBI Taxonomy" id="8364"/>
    <lineage>
        <taxon>Eukaryota</taxon>
        <taxon>Metazoa</taxon>
        <taxon>Chordata</taxon>
        <taxon>Craniata</taxon>
        <taxon>Vertebrata</taxon>
        <taxon>Euteleostomi</taxon>
        <taxon>Amphibia</taxon>
        <taxon>Batrachia</taxon>
        <taxon>Anura</taxon>
        <taxon>Pipoidea</taxon>
        <taxon>Pipidae</taxon>
        <taxon>Xenopodinae</taxon>
        <taxon>Xenopus</taxon>
        <taxon>Silurana</taxon>
    </lineage>
</organism>
<accession>Q0V9J5</accession>
<feature type="chain" id="PRO_0000314159" description="Probable RNA-binding protein EIF1AD">
    <location>
        <begin position="1"/>
        <end position="179"/>
    </location>
</feature>
<feature type="domain" description="S1-like" evidence="2">
    <location>
        <begin position="14"/>
        <end position="89"/>
    </location>
</feature>
<feature type="region of interest" description="Disordered" evidence="3">
    <location>
        <begin position="117"/>
        <end position="179"/>
    </location>
</feature>
<feature type="compositionally biased region" description="Polar residues" evidence="3">
    <location>
        <begin position="120"/>
        <end position="134"/>
    </location>
</feature>
<feature type="compositionally biased region" description="Acidic residues" evidence="3">
    <location>
        <begin position="160"/>
        <end position="179"/>
    </location>
</feature>
<reference key="1">
    <citation type="submission" date="2006-08" db="EMBL/GenBank/DDBJ databases">
        <authorList>
            <consortium name="NIH - Xenopus Gene Collection (XGC) project"/>
        </authorList>
    </citation>
    <scope>NUCLEOTIDE SEQUENCE [LARGE SCALE MRNA]</scope>
    <source>
        <strain>N6</strain>
        <tissue>Ovary</tissue>
    </source>
</reference>
<gene>
    <name type="primary">eif1ad</name>
</gene>
<keyword id="KW-0539">Nucleus</keyword>
<keyword id="KW-1185">Reference proteome</keyword>
<keyword id="KW-0694">RNA-binding</keyword>
<dbReference type="EMBL" id="BC121518">
    <property type="protein sequence ID" value="AAI21519.1"/>
    <property type="molecule type" value="mRNA"/>
</dbReference>
<dbReference type="RefSeq" id="NP_001016696.1">
    <property type="nucleotide sequence ID" value="NM_001016696.3"/>
</dbReference>
<dbReference type="SMR" id="Q0V9J5"/>
<dbReference type="FunCoup" id="Q0V9J5">
    <property type="interactions" value="4220"/>
</dbReference>
<dbReference type="STRING" id="8364.ENSXETP00000032155"/>
<dbReference type="PaxDb" id="8364-ENSXETP00000024962"/>
<dbReference type="DNASU" id="549450"/>
<dbReference type="GeneID" id="549450"/>
<dbReference type="KEGG" id="xtr:549450"/>
<dbReference type="AGR" id="Xenbase:XB-GENE-5854068"/>
<dbReference type="CTD" id="84285"/>
<dbReference type="Xenbase" id="XB-GENE-5854068">
    <property type="gene designation" value="eif1ad"/>
</dbReference>
<dbReference type="eggNOG" id="KOG2925">
    <property type="taxonomic scope" value="Eukaryota"/>
</dbReference>
<dbReference type="HOGENOM" id="CLU_106477_2_0_1"/>
<dbReference type="InParanoid" id="Q0V9J5"/>
<dbReference type="OMA" id="PNRMQAP"/>
<dbReference type="OrthoDB" id="1738325at2759"/>
<dbReference type="PhylomeDB" id="Q0V9J5"/>
<dbReference type="TreeFam" id="TF314439"/>
<dbReference type="Proteomes" id="UP000008143">
    <property type="component" value="Chromosome 4"/>
</dbReference>
<dbReference type="Bgee" id="ENSXETG00000011431">
    <property type="expression patterns" value="Expressed in gastrula and 14 other cell types or tissues"/>
</dbReference>
<dbReference type="GO" id="GO:0005634">
    <property type="term" value="C:nucleus"/>
    <property type="evidence" value="ECO:0007669"/>
    <property type="project" value="UniProtKB-SubCell"/>
</dbReference>
<dbReference type="GO" id="GO:0003723">
    <property type="term" value="F:RNA binding"/>
    <property type="evidence" value="ECO:0007669"/>
    <property type="project" value="UniProtKB-KW"/>
</dbReference>
<dbReference type="GO" id="GO:0003743">
    <property type="term" value="F:translation initiation factor activity"/>
    <property type="evidence" value="ECO:0007669"/>
    <property type="project" value="InterPro"/>
</dbReference>
<dbReference type="CDD" id="cd05792">
    <property type="entry name" value="S1_eIF1AD_like"/>
    <property type="match status" value="1"/>
</dbReference>
<dbReference type="Gene3D" id="1.10.1200.180">
    <property type="match status" value="1"/>
</dbReference>
<dbReference type="Gene3D" id="2.40.50.140">
    <property type="entry name" value="Nucleic acid-binding proteins"/>
    <property type="match status" value="1"/>
</dbReference>
<dbReference type="InterPro" id="IPR039294">
    <property type="entry name" value="EIF1AD"/>
</dbReference>
<dbReference type="InterPro" id="IPR012340">
    <property type="entry name" value="NA-bd_OB-fold"/>
</dbReference>
<dbReference type="InterPro" id="IPR006196">
    <property type="entry name" value="RNA-binding_domain_S1_IF1"/>
</dbReference>
<dbReference type="InterPro" id="IPR001253">
    <property type="entry name" value="TIF_eIF-1A"/>
</dbReference>
<dbReference type="PANTHER" id="PTHR21641:SF0">
    <property type="entry name" value="RNA-BINDING PROTEIN EIF1AD-RELATED"/>
    <property type="match status" value="1"/>
</dbReference>
<dbReference type="PANTHER" id="PTHR21641">
    <property type="entry name" value="TRANSLATION INITIATION FACTOR-RELATED"/>
    <property type="match status" value="1"/>
</dbReference>
<dbReference type="Pfam" id="PF01176">
    <property type="entry name" value="eIF-1a"/>
    <property type="match status" value="1"/>
</dbReference>
<dbReference type="SMART" id="SM00652">
    <property type="entry name" value="eIF1a"/>
    <property type="match status" value="1"/>
</dbReference>
<dbReference type="SUPFAM" id="SSF50249">
    <property type="entry name" value="Nucleic acid-binding proteins"/>
    <property type="match status" value="1"/>
</dbReference>
<dbReference type="PROSITE" id="PS50832">
    <property type="entry name" value="S1_IF1_TYPE"/>
    <property type="match status" value="1"/>
</dbReference>
<protein>
    <recommendedName>
        <fullName>Probable RNA-binding protein EIF1AD</fullName>
    </recommendedName>
    <alternativeName>
        <fullName>Eukaryotic translation initiation factor 1A domain-containing protein</fullName>
    </alternativeName>
</protein>
<evidence type="ECO:0000250" key="1"/>
<evidence type="ECO:0000255" key="2">
    <source>
        <dbReference type="PROSITE-ProRule" id="PRU00181"/>
    </source>
</evidence>
<evidence type="ECO:0000256" key="3">
    <source>
        <dbReference type="SAM" id="MobiDB-lite"/>
    </source>
</evidence>
<evidence type="ECO:0000305" key="4"/>
<proteinExistence type="evidence at transcript level"/>
<name>EIF1A_XENTR</name>
<sequence>MSKATKRKHVVKEVLGDYVQPTEHQRIVKVLGSPGNNLHEVETSEGERFLASMPTKFRKNIWIKRGDFLIVDPIAEGEKVKAEIAFILYKDHQRLLQKEGLWPEGFTQDKTGVVTKENENNGIQSTEALSTAQAKEQGEDSETDDDSGLFVNTNRVHYEDSEEESESEEESESEEDEEN</sequence>